<name>PTSS1_HUMAN</name>
<keyword id="KW-0002">3D-structure</keyword>
<keyword id="KW-0007">Acetylation</keyword>
<keyword id="KW-0025">Alternative splicing</keyword>
<keyword id="KW-0225">Disease variant</keyword>
<keyword id="KW-0242">Dwarfism</keyword>
<keyword id="KW-0256">Endoplasmic reticulum</keyword>
<keyword id="KW-0991">Intellectual disability</keyword>
<keyword id="KW-0444">Lipid biosynthesis</keyword>
<keyword id="KW-0443">Lipid metabolism</keyword>
<keyword id="KW-0472">Membrane</keyword>
<keyword id="KW-0594">Phospholipid biosynthesis</keyword>
<keyword id="KW-1208">Phospholipid metabolism</keyword>
<keyword id="KW-0597">Phosphoprotein</keyword>
<keyword id="KW-1267">Proteomics identification</keyword>
<keyword id="KW-1185">Reference proteome</keyword>
<keyword id="KW-0808">Transferase</keyword>
<keyword id="KW-0812">Transmembrane</keyword>
<keyword id="KW-1133">Transmembrane helix</keyword>
<accession>P48651</accession>
<accession>B4DE85</accession>
<accession>E5RFC5</accession>
<accession>Q9BUQ5</accession>
<gene>
    <name type="primary">PTDSS1</name>
    <name type="synonym">KIAA0024</name>
    <name type="synonym">PSSA</name>
</gene>
<protein>
    <recommendedName>
        <fullName>Phosphatidylserine synthase 1</fullName>
        <shortName>PSS-1</shortName>
        <shortName>PtdSer synthase 1</shortName>
        <ecNumber evidence="4 5">2.7.8.29</ecNumber>
    </recommendedName>
    <alternativeName>
        <fullName>Serine-exchange enzyme I</fullName>
    </alternativeName>
</protein>
<reference key="1">
    <citation type="journal article" date="1994" name="DNA Res.">
        <title>Prediction of the coding sequences of unidentified human genes. I. The coding sequences of 40 new genes (KIAA0001-KIAA0040) deduced by analysis of randomly sampled cDNA clones from human immature myeloid cell line KG-1.</title>
        <authorList>
            <person name="Nomura N."/>
            <person name="Miyajima N."/>
            <person name="Sazuka T."/>
            <person name="Tanaka A."/>
            <person name="Kawarabayasi Y."/>
            <person name="Sato S."/>
            <person name="Nagase T."/>
            <person name="Seki N."/>
            <person name="Ishikawa K."/>
            <person name="Tabata S."/>
        </authorList>
    </citation>
    <scope>NUCLEOTIDE SEQUENCE [LARGE SCALE MRNA] (ISOFORM 1)</scope>
    <source>
        <tissue>Bone marrow</tissue>
    </source>
</reference>
<reference key="2">
    <citation type="journal article" date="2004" name="Nat. Genet.">
        <title>Complete sequencing and characterization of 21,243 full-length human cDNAs.</title>
        <authorList>
            <person name="Ota T."/>
            <person name="Suzuki Y."/>
            <person name="Nishikawa T."/>
            <person name="Otsuki T."/>
            <person name="Sugiyama T."/>
            <person name="Irie R."/>
            <person name="Wakamatsu A."/>
            <person name="Hayashi K."/>
            <person name="Sato H."/>
            <person name="Nagai K."/>
            <person name="Kimura K."/>
            <person name="Makita H."/>
            <person name="Sekine M."/>
            <person name="Obayashi M."/>
            <person name="Nishi T."/>
            <person name="Shibahara T."/>
            <person name="Tanaka T."/>
            <person name="Ishii S."/>
            <person name="Yamamoto J."/>
            <person name="Saito K."/>
            <person name="Kawai Y."/>
            <person name="Isono Y."/>
            <person name="Nakamura Y."/>
            <person name="Nagahari K."/>
            <person name="Murakami K."/>
            <person name="Yasuda T."/>
            <person name="Iwayanagi T."/>
            <person name="Wagatsuma M."/>
            <person name="Shiratori A."/>
            <person name="Sudo H."/>
            <person name="Hosoiri T."/>
            <person name="Kaku Y."/>
            <person name="Kodaira H."/>
            <person name="Kondo H."/>
            <person name="Sugawara M."/>
            <person name="Takahashi M."/>
            <person name="Kanda K."/>
            <person name="Yokoi T."/>
            <person name="Furuya T."/>
            <person name="Kikkawa E."/>
            <person name="Omura Y."/>
            <person name="Abe K."/>
            <person name="Kamihara K."/>
            <person name="Katsuta N."/>
            <person name="Sato K."/>
            <person name="Tanikawa M."/>
            <person name="Yamazaki M."/>
            <person name="Ninomiya K."/>
            <person name="Ishibashi T."/>
            <person name="Yamashita H."/>
            <person name="Murakawa K."/>
            <person name="Fujimori K."/>
            <person name="Tanai H."/>
            <person name="Kimata M."/>
            <person name="Watanabe M."/>
            <person name="Hiraoka S."/>
            <person name="Chiba Y."/>
            <person name="Ishida S."/>
            <person name="Ono Y."/>
            <person name="Takiguchi S."/>
            <person name="Watanabe S."/>
            <person name="Yosida M."/>
            <person name="Hotuta T."/>
            <person name="Kusano J."/>
            <person name="Kanehori K."/>
            <person name="Takahashi-Fujii A."/>
            <person name="Hara H."/>
            <person name="Tanase T.-O."/>
            <person name="Nomura Y."/>
            <person name="Togiya S."/>
            <person name="Komai F."/>
            <person name="Hara R."/>
            <person name="Takeuchi K."/>
            <person name="Arita M."/>
            <person name="Imose N."/>
            <person name="Musashino K."/>
            <person name="Yuuki H."/>
            <person name="Oshima A."/>
            <person name="Sasaki N."/>
            <person name="Aotsuka S."/>
            <person name="Yoshikawa Y."/>
            <person name="Matsunawa H."/>
            <person name="Ichihara T."/>
            <person name="Shiohata N."/>
            <person name="Sano S."/>
            <person name="Moriya S."/>
            <person name="Momiyama H."/>
            <person name="Satoh N."/>
            <person name="Takami S."/>
            <person name="Terashima Y."/>
            <person name="Suzuki O."/>
            <person name="Nakagawa S."/>
            <person name="Senoh A."/>
            <person name="Mizoguchi H."/>
            <person name="Goto Y."/>
            <person name="Shimizu F."/>
            <person name="Wakebe H."/>
            <person name="Hishigaki H."/>
            <person name="Watanabe T."/>
            <person name="Sugiyama A."/>
            <person name="Takemoto M."/>
            <person name="Kawakami B."/>
            <person name="Yamazaki M."/>
            <person name="Watanabe K."/>
            <person name="Kumagai A."/>
            <person name="Itakura S."/>
            <person name="Fukuzumi Y."/>
            <person name="Fujimori Y."/>
            <person name="Komiyama M."/>
            <person name="Tashiro H."/>
            <person name="Tanigami A."/>
            <person name="Fujiwara T."/>
            <person name="Ono T."/>
            <person name="Yamada K."/>
            <person name="Fujii Y."/>
            <person name="Ozaki K."/>
            <person name="Hirao M."/>
            <person name="Ohmori Y."/>
            <person name="Kawabata A."/>
            <person name="Hikiji T."/>
            <person name="Kobatake N."/>
            <person name="Inagaki H."/>
            <person name="Ikema Y."/>
            <person name="Okamoto S."/>
            <person name="Okitani R."/>
            <person name="Kawakami T."/>
            <person name="Noguchi S."/>
            <person name="Itoh T."/>
            <person name="Shigeta K."/>
            <person name="Senba T."/>
            <person name="Matsumura K."/>
            <person name="Nakajima Y."/>
            <person name="Mizuno T."/>
            <person name="Morinaga M."/>
            <person name="Sasaki M."/>
            <person name="Togashi T."/>
            <person name="Oyama M."/>
            <person name="Hata H."/>
            <person name="Watanabe M."/>
            <person name="Komatsu T."/>
            <person name="Mizushima-Sugano J."/>
            <person name="Satoh T."/>
            <person name="Shirai Y."/>
            <person name="Takahashi Y."/>
            <person name="Nakagawa K."/>
            <person name="Okumura K."/>
            <person name="Nagase T."/>
            <person name="Nomura N."/>
            <person name="Kikuchi H."/>
            <person name="Masuho Y."/>
            <person name="Yamashita R."/>
            <person name="Nakai K."/>
            <person name="Yada T."/>
            <person name="Nakamura Y."/>
            <person name="Ohara O."/>
            <person name="Isogai T."/>
            <person name="Sugano S."/>
        </authorList>
    </citation>
    <scope>NUCLEOTIDE SEQUENCE [LARGE SCALE MRNA] (ISOFORM 3)</scope>
    <source>
        <tissue>Cerebellum</tissue>
    </source>
</reference>
<reference key="3">
    <citation type="journal article" date="2006" name="Nature">
        <title>DNA sequence and analysis of human chromosome 8.</title>
        <authorList>
            <person name="Nusbaum C."/>
            <person name="Mikkelsen T.S."/>
            <person name="Zody M.C."/>
            <person name="Asakawa S."/>
            <person name="Taudien S."/>
            <person name="Garber M."/>
            <person name="Kodira C.D."/>
            <person name="Schueler M.G."/>
            <person name="Shimizu A."/>
            <person name="Whittaker C.A."/>
            <person name="Chang J.L."/>
            <person name="Cuomo C.A."/>
            <person name="Dewar K."/>
            <person name="FitzGerald M.G."/>
            <person name="Yang X."/>
            <person name="Allen N.R."/>
            <person name="Anderson S."/>
            <person name="Asakawa T."/>
            <person name="Blechschmidt K."/>
            <person name="Bloom T."/>
            <person name="Borowsky M.L."/>
            <person name="Butler J."/>
            <person name="Cook A."/>
            <person name="Corum B."/>
            <person name="DeArellano K."/>
            <person name="DeCaprio D."/>
            <person name="Dooley K.T."/>
            <person name="Dorris L. III"/>
            <person name="Engels R."/>
            <person name="Gloeckner G."/>
            <person name="Hafez N."/>
            <person name="Hagopian D.S."/>
            <person name="Hall J.L."/>
            <person name="Ishikawa S.K."/>
            <person name="Jaffe D.B."/>
            <person name="Kamat A."/>
            <person name="Kudoh J."/>
            <person name="Lehmann R."/>
            <person name="Lokitsang T."/>
            <person name="Macdonald P."/>
            <person name="Major J.E."/>
            <person name="Matthews C.D."/>
            <person name="Mauceli E."/>
            <person name="Menzel U."/>
            <person name="Mihalev A.H."/>
            <person name="Minoshima S."/>
            <person name="Murayama Y."/>
            <person name="Naylor J.W."/>
            <person name="Nicol R."/>
            <person name="Nguyen C."/>
            <person name="O'Leary S.B."/>
            <person name="O'Neill K."/>
            <person name="Parker S.C.J."/>
            <person name="Polley A."/>
            <person name="Raymond C.K."/>
            <person name="Reichwald K."/>
            <person name="Rodriguez J."/>
            <person name="Sasaki T."/>
            <person name="Schilhabel M."/>
            <person name="Siddiqui R."/>
            <person name="Smith C.L."/>
            <person name="Sneddon T.P."/>
            <person name="Talamas J.A."/>
            <person name="Tenzin P."/>
            <person name="Topham K."/>
            <person name="Venkataraman V."/>
            <person name="Wen G."/>
            <person name="Yamazaki S."/>
            <person name="Young S.K."/>
            <person name="Zeng Q."/>
            <person name="Zimmer A.R."/>
            <person name="Rosenthal A."/>
            <person name="Birren B.W."/>
            <person name="Platzer M."/>
            <person name="Shimizu N."/>
            <person name="Lander E.S."/>
        </authorList>
    </citation>
    <scope>NUCLEOTIDE SEQUENCE [LARGE SCALE GENOMIC DNA]</scope>
</reference>
<reference key="4">
    <citation type="journal article" date="2004" name="Genome Res.">
        <title>The status, quality, and expansion of the NIH full-length cDNA project: the Mammalian Gene Collection (MGC).</title>
        <authorList>
            <consortium name="The MGC Project Team"/>
        </authorList>
    </citation>
    <scope>NUCLEOTIDE SEQUENCE [LARGE SCALE MRNA] (ISOFORMS 1 AND 2)</scope>
    <source>
        <tissue>Brain</tissue>
        <tissue>Lymph</tissue>
        <tissue>Muscle</tissue>
    </source>
</reference>
<reference key="5">
    <citation type="journal article" date="2006" name="Cell">
        <title>Global, in vivo, and site-specific phosphorylation dynamics in signaling networks.</title>
        <authorList>
            <person name="Olsen J.V."/>
            <person name="Blagoev B."/>
            <person name="Gnad F."/>
            <person name="Macek B."/>
            <person name="Kumar C."/>
            <person name="Mortensen P."/>
            <person name="Mann M."/>
        </authorList>
    </citation>
    <scope>IDENTIFICATION BY MASS SPECTROMETRY [LARGE SCALE ANALYSIS]</scope>
    <source>
        <tissue>Cervix carcinoma</tissue>
    </source>
</reference>
<reference key="6">
    <citation type="journal article" date="2008" name="J. Proteome Res.">
        <title>Combining protein-based IMAC, peptide-based IMAC, and MudPIT for efficient phosphoproteomic analysis.</title>
        <authorList>
            <person name="Cantin G.T."/>
            <person name="Yi W."/>
            <person name="Lu B."/>
            <person name="Park S.K."/>
            <person name="Xu T."/>
            <person name="Lee J.-D."/>
            <person name="Yates J.R. III"/>
        </authorList>
    </citation>
    <scope>IDENTIFICATION BY MASS SPECTROMETRY [LARGE SCALE ANALYSIS]</scope>
    <source>
        <tissue>Cervix carcinoma</tissue>
    </source>
</reference>
<reference key="7">
    <citation type="journal article" date="2008" name="Mol. Cell">
        <title>Kinase-selective enrichment enables quantitative phosphoproteomics of the kinome across the cell cycle.</title>
        <authorList>
            <person name="Daub H."/>
            <person name="Olsen J.V."/>
            <person name="Bairlein M."/>
            <person name="Gnad F."/>
            <person name="Oppermann F.S."/>
            <person name="Korner R."/>
            <person name="Greff Z."/>
            <person name="Keri G."/>
            <person name="Stemmann O."/>
            <person name="Mann M."/>
        </authorList>
    </citation>
    <scope>PHOSPHORYLATION [LARGE SCALE ANALYSIS] AT SER-442</scope>
    <scope>IDENTIFICATION BY MASS SPECTROMETRY [LARGE SCALE ANALYSIS]</scope>
    <source>
        <tissue>Cervix carcinoma</tissue>
    </source>
</reference>
<reference key="8">
    <citation type="journal article" date="2008" name="Proc. Natl. Acad. Sci. U.S.A.">
        <title>A quantitative atlas of mitotic phosphorylation.</title>
        <authorList>
            <person name="Dephoure N."/>
            <person name="Zhou C."/>
            <person name="Villen J."/>
            <person name="Beausoleil S.A."/>
            <person name="Bakalarski C.E."/>
            <person name="Elledge S.J."/>
            <person name="Gygi S.P."/>
        </authorList>
    </citation>
    <scope>PHOSPHORYLATION [LARGE SCALE ANALYSIS] AT SER-417 AND SER-425</scope>
    <scope>IDENTIFICATION BY MASS SPECTROMETRY [LARGE SCALE ANALYSIS]</scope>
    <source>
        <tissue>Cervix carcinoma</tissue>
    </source>
</reference>
<reference key="9">
    <citation type="journal article" date="2009" name="Biochem. J.">
        <title>Purification and characterization of human phosphatidylserine synthases 1 and 2.</title>
        <authorList>
            <person name="Tomohiro S."/>
            <person name="Kawaguti A."/>
            <person name="Kawabe Y."/>
            <person name="Kitada S."/>
            <person name="Kuge O."/>
        </authorList>
    </citation>
    <scope>FUNCTION</scope>
    <scope>CATALYTIC ACTIVITY</scope>
    <scope>SUBSTRATE SPECIFICITY</scope>
    <scope>ACTIVITY REGULATION</scope>
    <scope>BIOPHYSICOCHEMICAL PROPERTIES</scope>
</reference>
<reference key="10">
    <citation type="journal article" date="2009" name="Mol. Cell. Proteomics">
        <title>Large-scale proteomics analysis of the human kinome.</title>
        <authorList>
            <person name="Oppermann F.S."/>
            <person name="Gnad F."/>
            <person name="Olsen J.V."/>
            <person name="Hornberger R."/>
            <person name="Greff Z."/>
            <person name="Keri G."/>
            <person name="Mann M."/>
            <person name="Daub H."/>
        </authorList>
    </citation>
    <scope>PHOSPHORYLATION [LARGE SCALE ANALYSIS] AT SER-442</scope>
    <scope>IDENTIFICATION BY MASS SPECTROMETRY [LARGE SCALE ANALYSIS]</scope>
</reference>
<reference key="11">
    <citation type="journal article" date="2010" name="Sci. Signal.">
        <title>Quantitative phosphoproteomics reveals widespread full phosphorylation site occupancy during mitosis.</title>
        <authorList>
            <person name="Olsen J.V."/>
            <person name="Vermeulen M."/>
            <person name="Santamaria A."/>
            <person name="Kumar C."/>
            <person name="Miller M.L."/>
            <person name="Jensen L.J."/>
            <person name="Gnad F."/>
            <person name="Cox J."/>
            <person name="Jensen T.S."/>
            <person name="Nigg E.A."/>
            <person name="Brunak S."/>
            <person name="Mann M."/>
        </authorList>
    </citation>
    <scope>PHOSPHORYLATION [LARGE SCALE ANALYSIS] AT SER-442 AND SER-454</scope>
    <scope>IDENTIFICATION BY MASS SPECTROMETRY [LARGE SCALE ANALYSIS]</scope>
    <source>
        <tissue>Cervix carcinoma</tissue>
    </source>
</reference>
<reference key="12">
    <citation type="journal article" date="2011" name="Sci. Signal.">
        <title>System-wide temporal characterization of the proteome and phosphoproteome of human embryonic stem cell differentiation.</title>
        <authorList>
            <person name="Rigbolt K.T."/>
            <person name="Prokhorova T.A."/>
            <person name="Akimov V."/>
            <person name="Henningsen J."/>
            <person name="Johansen P.T."/>
            <person name="Kratchmarova I."/>
            <person name="Kassem M."/>
            <person name="Mann M."/>
            <person name="Olsen J.V."/>
            <person name="Blagoev B."/>
        </authorList>
    </citation>
    <scope>IDENTIFICATION BY MASS SPECTROMETRY [LARGE SCALE ANALYSIS]</scope>
</reference>
<reference key="13">
    <citation type="journal article" date="2013" name="J. Proteome Res.">
        <title>Toward a comprehensive characterization of a human cancer cell phosphoproteome.</title>
        <authorList>
            <person name="Zhou H."/>
            <person name="Di Palma S."/>
            <person name="Preisinger C."/>
            <person name="Peng M."/>
            <person name="Polat A.N."/>
            <person name="Heck A.J."/>
            <person name="Mohammed S."/>
        </authorList>
    </citation>
    <scope>PHOSPHORYLATION [LARGE SCALE ANALYSIS] AT SER-417 AND SER-425</scope>
    <scope>IDENTIFICATION BY MASS SPECTROMETRY [LARGE SCALE ANALYSIS]</scope>
    <source>
        <tissue>Cervix carcinoma</tissue>
        <tissue>Erythroleukemia</tissue>
    </source>
</reference>
<reference key="14">
    <citation type="journal article" date="2015" name="Proteomics">
        <title>N-terminome analysis of the human mitochondrial proteome.</title>
        <authorList>
            <person name="Vaca Jacome A.S."/>
            <person name="Rabilloud T."/>
            <person name="Schaeffer-Reiss C."/>
            <person name="Rompais M."/>
            <person name="Ayoub D."/>
            <person name="Lane L."/>
            <person name="Bairoch A."/>
            <person name="Van Dorsselaer A."/>
            <person name="Carapito C."/>
        </authorList>
    </citation>
    <scope>ACETYLATION [LARGE SCALE ANALYSIS] AT ALA-2</scope>
    <scope>CLEAVAGE OF INITIATOR METHIONINE [LARGE SCALE ANALYSIS]</scope>
    <scope>IDENTIFICATION BY MASS SPECTROMETRY [LARGE SCALE ANALYSIS]</scope>
</reference>
<reference key="15">
    <citation type="journal article" date="2014" name="Nat. Genet.">
        <title>Gain-of-function mutations in the phosphatidylserine synthase 1 (PTDSS1) gene cause Lenz-Majewski syndrome.</title>
        <authorList>
            <person name="Sousa S.B."/>
            <person name="Jenkins D."/>
            <person name="Chanudet E."/>
            <person name="Tasseva G."/>
            <person name="Ishida M."/>
            <person name="Anderson G."/>
            <person name="Docker J."/>
            <person name="Ryten M."/>
            <person name="Sa J."/>
            <person name="Saraiva J.M."/>
            <person name="Barnicoat A."/>
            <person name="Scott R."/>
            <person name="Calder A."/>
            <person name="Wattanasirichaigoon D."/>
            <person name="Chrzanowska K."/>
            <person name="Simandlova M."/>
            <person name="Van Maldergem L."/>
            <person name="Stanier P."/>
            <person name="Beales P.L."/>
            <person name="Vance J.E."/>
            <person name="Moore G.E."/>
        </authorList>
    </citation>
    <scope>VARIANTS LMHD PRO-265; SER-269 AND ARG-353</scope>
    <scope>CHARACTERIZATION OF VARIANTS LMHD PRO-265; SER-269 AND ARG-353</scope>
    <scope>FUNCTION</scope>
    <scope>CATALYTIC ACTIVITY</scope>
    <scope>ACTIVITY REGULATION</scope>
</reference>
<evidence type="ECO:0000250" key="1">
    <source>
        <dbReference type="UniProtKB" id="Q99LH2"/>
    </source>
</evidence>
<evidence type="ECO:0000255" key="2"/>
<evidence type="ECO:0000256" key="3">
    <source>
        <dbReference type="SAM" id="MobiDB-lite"/>
    </source>
</evidence>
<evidence type="ECO:0000269" key="4">
    <source>
    </source>
</evidence>
<evidence type="ECO:0000269" key="5">
    <source>
    </source>
</evidence>
<evidence type="ECO:0000303" key="6">
    <source>
    </source>
</evidence>
<evidence type="ECO:0000303" key="7">
    <source>
    </source>
</evidence>
<evidence type="ECO:0000305" key="8"/>
<evidence type="ECO:0000305" key="9">
    <source>
    </source>
</evidence>
<evidence type="ECO:0007744" key="10">
    <source>
    </source>
</evidence>
<evidence type="ECO:0007744" key="11">
    <source>
    </source>
</evidence>
<evidence type="ECO:0007744" key="12">
    <source>
    </source>
</evidence>
<evidence type="ECO:0007744" key="13">
    <source>
    </source>
</evidence>
<evidence type="ECO:0007744" key="14">
    <source>
    </source>
</evidence>
<evidence type="ECO:0007744" key="15">
    <source>
    </source>
</evidence>
<evidence type="ECO:0007829" key="16">
    <source>
        <dbReference type="PDB" id="9B4F"/>
    </source>
</evidence>
<sequence>MASCVGSRTLSKDDVNYKMHFRMINEQQVEDITIDFFYRPHTITLLSFTIVSLMYFAFTRDDSVPEDNIWRGILSVIFFFLIISVLAFPNGPFTRPHPALWRMVFGLSVLYFLFLVFLLFLNFEQVKSLMYWLDPNLRYATREADVMEYAVNCHVITWERIISHFDIFAFGHFWGWAMKALLIRSYGLCWTISITWELTELFFMHLLPNFAECWWDQVILDILLCNGGGIWLGMVVCRFLEMRTYHWASFKDIHTTTGKIKRAVLQFTPASWTYVRWFDPKSSFQRVAGVYLFMIIWQLTELNTFFLKHIFVFQASHPLSWGRILFIGGITAPTVRQYYAYLTDTQCKRVGTQCWVFGVIGFLEAIVCIKFGQDLFSKTQILYVVLWLLCVAFTTFLCLYGMIWYAEHYGHREKTYSECEDGTYSPEISWHHRKGTKGSEDSPPKHAGNNESHSSRRRNRHSKSKVTNGVGKK</sequence>
<comment type="function">
    <text evidence="4 5">Catalyzes a base-exchange reaction in which the polar head group of phosphatidylethanolamine (PE) or phosphatidylcholine (PC) is replaced by L-serine (PubMed:19014349, PubMed:24241535). Catalyzes mainly the conversion of phosphatidylcholine (PubMed:19014349, PubMed:24241535). Also converts, in vitro and to a lesser extent, phosphatidylethanolamine (PubMed:19014349, PubMed:24241535).</text>
</comment>
<comment type="catalytic activity">
    <reaction evidence="4 5">
        <text>a 1,2-diacyl-sn-glycero-3-phosphoethanolamine + L-serine = a 1,2-diacyl-sn-glycero-3-phospho-L-serine + ethanolamine</text>
        <dbReference type="Rhea" id="RHEA:27606"/>
        <dbReference type="ChEBI" id="CHEBI:33384"/>
        <dbReference type="ChEBI" id="CHEBI:57262"/>
        <dbReference type="ChEBI" id="CHEBI:57603"/>
        <dbReference type="ChEBI" id="CHEBI:64612"/>
        <dbReference type="EC" id="2.7.8.29"/>
    </reaction>
    <physiologicalReaction direction="left-to-right" evidence="9">
        <dbReference type="Rhea" id="RHEA:27607"/>
    </physiologicalReaction>
</comment>
<comment type="catalytic activity">
    <reaction evidence="4 5">
        <text>a 1,2-diacyl-sn-glycero-3-phosphocholine + L-serine = a 1,2-diacyl-sn-glycero-3-phospho-L-serine + choline</text>
        <dbReference type="Rhea" id="RHEA:45088"/>
        <dbReference type="ChEBI" id="CHEBI:15354"/>
        <dbReference type="ChEBI" id="CHEBI:33384"/>
        <dbReference type="ChEBI" id="CHEBI:57262"/>
        <dbReference type="ChEBI" id="CHEBI:57643"/>
    </reaction>
    <physiologicalReaction direction="left-to-right" evidence="9">
        <dbReference type="Rhea" id="RHEA:45089"/>
    </physiologicalReaction>
</comment>
<comment type="activity regulation">
    <text evidence="4 5">Requires calcium ions (PubMed:19014349). Inhibited by exogenous phosphatidylserine (PubMed:24241535).</text>
</comment>
<comment type="biophysicochemical properties">
    <kinetics>
        <KM evidence="4">67 uM for serine (in the presence of 2 mM PC)</KM>
        <KM evidence="4">24 uM for serine (in the presence of 1 mM PE)</KM>
    </kinetics>
    <phDependence>
        <text evidence="4">Optimum pH for both PC and PE is between 7.0 and 7.5.</text>
    </phDependence>
</comment>
<comment type="pathway">
    <text>Phospholipid metabolism; phosphatidylserine biosynthesis.</text>
</comment>
<comment type="subcellular location">
    <subcellularLocation>
        <location evidence="1">Endoplasmic reticulum membrane</location>
        <topology evidence="1">Multi-pass membrane protein</topology>
    </subcellularLocation>
    <text evidence="1">Highly enriched in the mitochondria-associated membrane (MAM).</text>
</comment>
<comment type="alternative products">
    <event type="alternative splicing"/>
    <isoform>
        <id>P48651-1</id>
        <name>1</name>
        <sequence type="displayed"/>
    </isoform>
    <isoform>
        <id>P48651-2</id>
        <name>2</name>
        <sequence type="described" ref="VSP_055980"/>
    </isoform>
    <isoform>
        <id>P48651-3</id>
        <name>3</name>
        <sequence type="described" ref="VSP_057421 VSP_057422"/>
    </isoform>
</comment>
<comment type="disease" evidence="5">
    <disease id="DI-04022">
        <name>Lenz-Majewski hyperostotic dwarfism</name>
        <acronym>LMHD</acronym>
        <description>A syndrome of intellectual disability and multiple congenital anomalies that features generalized craniotubular hyperostosis. LMHD is characterized by the combination of sclerosing bone dysplasia, intellectual disability and distinct craniofacial, dental, cutaneous and distal limb anomalies. The progressive generalized hyperostosis associated with this syndrome affects the cranium, the vertebrae and the diaphyses of tubular bones, leading to severe growth restriction.</description>
        <dbReference type="MIM" id="151050"/>
    </disease>
    <text>The disease is caused by variants affecting the gene represented in this entry.</text>
</comment>
<comment type="similarity">
    <text evidence="8">Belongs to the phosphatidyl serine synthase family.</text>
</comment>
<feature type="initiator methionine" description="Removed" evidence="15">
    <location>
        <position position="1"/>
    </location>
</feature>
<feature type="chain" id="PRO_0000056829" description="Phosphatidylserine synthase 1">
    <location>
        <begin position="2"/>
        <end position="473"/>
    </location>
</feature>
<feature type="topological domain" description="Cytoplasmic" evidence="2">
    <location>
        <begin position="2"/>
        <end position="35"/>
    </location>
</feature>
<feature type="transmembrane region" description="Helical" evidence="2">
    <location>
        <begin position="36"/>
        <end position="56"/>
    </location>
</feature>
<feature type="topological domain" description="Lumenal" evidence="2">
    <location>
        <begin position="57"/>
        <end position="72"/>
    </location>
</feature>
<feature type="transmembrane region" description="Helical" evidence="2">
    <location>
        <begin position="73"/>
        <end position="93"/>
    </location>
</feature>
<feature type="topological domain" description="Cytoplasmic" evidence="2">
    <location>
        <begin position="94"/>
        <end position="102"/>
    </location>
</feature>
<feature type="transmembrane region" description="Helical" evidence="2">
    <location>
        <begin position="103"/>
        <end position="123"/>
    </location>
</feature>
<feature type="topological domain" description="Lumenal" evidence="2">
    <location>
        <begin position="124"/>
        <end position="186"/>
    </location>
</feature>
<feature type="transmembrane region" description="Helical" evidence="2">
    <location>
        <begin position="187"/>
        <end position="207"/>
    </location>
</feature>
<feature type="topological domain" description="Cytoplasmic" evidence="2">
    <location>
        <begin position="208"/>
        <end position="216"/>
    </location>
</feature>
<feature type="transmembrane region" description="Helical" evidence="2">
    <location>
        <begin position="217"/>
        <end position="237"/>
    </location>
</feature>
<feature type="topological domain" description="Lumenal" evidence="2">
    <location>
        <begin position="238"/>
        <end position="286"/>
    </location>
</feature>
<feature type="transmembrane region" description="Helical" evidence="2">
    <location>
        <begin position="287"/>
        <end position="307"/>
    </location>
</feature>
<feature type="topological domain" description="Cytoplasmic" evidence="2">
    <location>
        <begin position="308"/>
        <end position="319"/>
    </location>
</feature>
<feature type="transmembrane region" description="Helical" evidence="2">
    <location>
        <begin position="320"/>
        <end position="342"/>
    </location>
</feature>
<feature type="topological domain" description="Lumenal" evidence="2">
    <location>
        <begin position="343"/>
        <end position="355"/>
    </location>
</feature>
<feature type="transmembrane region" description="Helical" evidence="2">
    <location>
        <begin position="356"/>
        <end position="376"/>
    </location>
</feature>
<feature type="topological domain" description="Cytoplasmic" evidence="2">
    <location>
        <begin position="377"/>
        <end position="383"/>
    </location>
</feature>
<feature type="transmembrane region" description="Helical" evidence="2">
    <location>
        <begin position="384"/>
        <end position="404"/>
    </location>
</feature>
<feature type="topological domain" description="Lumenal" evidence="2">
    <location>
        <begin position="405"/>
        <end position="473"/>
    </location>
</feature>
<feature type="region of interest" description="Disordered" evidence="3">
    <location>
        <begin position="430"/>
        <end position="473"/>
    </location>
</feature>
<feature type="compositionally biased region" description="Basic residues" evidence="3">
    <location>
        <begin position="455"/>
        <end position="464"/>
    </location>
</feature>
<feature type="modified residue" description="N-acetylalanine" evidence="15">
    <location>
        <position position="2"/>
    </location>
</feature>
<feature type="modified residue" description="Phosphoserine" evidence="10 14">
    <location>
        <position position="417"/>
    </location>
</feature>
<feature type="modified residue" description="Phosphoserine" evidence="10 14">
    <location>
        <position position="425"/>
    </location>
</feature>
<feature type="modified residue" description="Phosphoserine" evidence="11 12 13">
    <location>
        <position position="442"/>
    </location>
</feature>
<feature type="modified residue" description="Phosphoserine" evidence="13">
    <location>
        <position position="454"/>
    </location>
</feature>
<feature type="splice variant" id="VSP_057421" description="In isoform 3." evidence="6">
    <location>
        <begin position="1"/>
        <end position="203"/>
    </location>
</feature>
<feature type="splice variant" id="VSP_055980" description="In isoform 2." evidence="7">
    <location>
        <begin position="1"/>
        <end position="146"/>
    </location>
</feature>
<feature type="splice variant" id="VSP_057422" description="In isoform 3." evidence="6">
    <original>NNESHSSRRRNRHSKSKVTNGVGKK</original>
    <variation>EGTWGSLFEIVSLVSHRPGRVRQIIAWGAFANVGSLLTSALDMRSPVAARCVEGKR</variation>
    <location>
        <begin position="449"/>
        <end position="473"/>
    </location>
</feature>
<feature type="sequence variant" id="VAR_070987" description="In LMHD; does not affect protein levels; increases the rate of phosphatidylserine synthesis; profoundly impairs negative feedback enzyme regulation by phosphatidylserine; dbSNP:rs587777090." evidence="5">
    <original>L</original>
    <variation>P</variation>
    <location>
        <position position="265"/>
    </location>
</feature>
<feature type="sequence variant" id="VAR_070988" description="In LMHD; does not affect protein levels; increases the rate of phosphatidylserine synthesis; profoundly impairs negative feedback enzyme regulation by phosphatidylserine; dbSNP:rs587777089." evidence="5">
    <original>P</original>
    <variation>S</variation>
    <location>
        <position position="269"/>
    </location>
</feature>
<feature type="sequence variant" id="VAR_070989" description="In LMHD; does not affect protein levels; increases the rate of phosphatidylserine synthesis; profoundly impairs negative feedback enzyme regulation by phosphatidylserine; dbSNP:rs587777088." evidence="5">
    <original>Q</original>
    <variation>R</variation>
    <location>
        <position position="353"/>
    </location>
</feature>
<feature type="sequence variant" id="VAR_048735" description="In dbSNP:rs7835798.">
    <original>T</original>
    <variation>N</variation>
    <location>
        <position position="423"/>
    </location>
</feature>
<feature type="helix" evidence="16">
    <location>
        <begin position="41"/>
        <end position="45"/>
    </location>
</feature>
<feature type="helix" evidence="16">
    <location>
        <begin position="48"/>
        <end position="59"/>
    </location>
</feature>
<feature type="helix" evidence="16">
    <location>
        <begin position="65"/>
        <end position="86"/>
    </location>
</feature>
<feature type="helix" evidence="16">
    <location>
        <begin position="100"/>
        <end position="118"/>
    </location>
</feature>
<feature type="helix" evidence="16">
    <location>
        <begin position="123"/>
        <end position="133"/>
    </location>
</feature>
<feature type="helix" evidence="16">
    <location>
        <begin position="135"/>
        <end position="138"/>
    </location>
</feature>
<feature type="turn" evidence="16">
    <location>
        <begin position="143"/>
        <end position="145"/>
    </location>
</feature>
<feature type="helix" evidence="16">
    <location>
        <begin position="158"/>
        <end position="161"/>
    </location>
</feature>
<feature type="turn" evidence="16">
    <location>
        <begin position="163"/>
        <end position="167"/>
    </location>
</feature>
<feature type="helix" evidence="16">
    <location>
        <begin position="168"/>
        <end position="183"/>
    </location>
</feature>
<feature type="helix" evidence="16">
    <location>
        <begin position="186"/>
        <end position="202"/>
    </location>
</feature>
<feature type="turn" evidence="16">
    <location>
        <begin position="203"/>
        <end position="206"/>
    </location>
</feature>
<feature type="helix" evidence="16">
    <location>
        <begin position="214"/>
        <end position="217"/>
    </location>
</feature>
<feature type="helix" evidence="16">
    <location>
        <begin position="220"/>
        <end position="223"/>
    </location>
</feature>
<feature type="turn" evidence="16">
    <location>
        <begin position="224"/>
        <end position="226"/>
    </location>
</feature>
<feature type="helix" evidence="16">
    <location>
        <begin position="227"/>
        <end position="239"/>
    </location>
</feature>
<feature type="helix" evidence="16">
    <location>
        <begin position="286"/>
        <end position="310"/>
    </location>
</feature>
<feature type="strand" evidence="16">
    <location>
        <begin position="315"/>
        <end position="317"/>
    </location>
</feature>
<feature type="helix" evidence="16">
    <location>
        <begin position="318"/>
        <end position="341"/>
    </location>
</feature>
<feature type="strand" evidence="16">
    <location>
        <begin position="342"/>
        <end position="347"/>
    </location>
</feature>
<feature type="helix" evidence="16">
    <location>
        <begin position="352"/>
        <end position="372"/>
    </location>
</feature>
<feature type="helix" evidence="16">
    <location>
        <begin position="376"/>
        <end position="378"/>
    </location>
</feature>
<feature type="turn" evidence="16">
    <location>
        <begin position="381"/>
        <end position="386"/>
    </location>
</feature>
<feature type="helix" evidence="16">
    <location>
        <begin position="387"/>
        <end position="408"/>
    </location>
</feature>
<organism>
    <name type="scientific">Homo sapiens</name>
    <name type="common">Human</name>
    <dbReference type="NCBI Taxonomy" id="9606"/>
    <lineage>
        <taxon>Eukaryota</taxon>
        <taxon>Metazoa</taxon>
        <taxon>Chordata</taxon>
        <taxon>Craniata</taxon>
        <taxon>Vertebrata</taxon>
        <taxon>Euteleostomi</taxon>
        <taxon>Mammalia</taxon>
        <taxon>Eutheria</taxon>
        <taxon>Euarchontoglires</taxon>
        <taxon>Primates</taxon>
        <taxon>Haplorrhini</taxon>
        <taxon>Catarrhini</taxon>
        <taxon>Hominidae</taxon>
        <taxon>Homo</taxon>
    </lineage>
</organism>
<dbReference type="EC" id="2.7.8.29" evidence="4 5"/>
<dbReference type="EMBL" id="D14694">
    <property type="protein sequence ID" value="BAA03520.1"/>
    <property type="molecule type" value="mRNA"/>
</dbReference>
<dbReference type="EMBL" id="AK293513">
    <property type="protein sequence ID" value="BAG56996.1"/>
    <property type="molecule type" value="mRNA"/>
</dbReference>
<dbReference type="EMBL" id="AP003465">
    <property type="status" value="NOT_ANNOTATED_CDS"/>
    <property type="molecule type" value="Genomic_DNA"/>
</dbReference>
<dbReference type="EMBL" id="KC877275">
    <property type="status" value="NOT_ANNOTATED_CDS"/>
    <property type="molecule type" value="Genomic_DNA"/>
</dbReference>
<dbReference type="EMBL" id="BC004192">
    <property type="protein sequence ID" value="AAH04192.1"/>
    <property type="molecule type" value="mRNA"/>
</dbReference>
<dbReference type="EMBL" id="BC002376">
    <property type="protein sequence ID" value="AAH02376.2"/>
    <property type="molecule type" value="mRNA"/>
</dbReference>
<dbReference type="EMBL" id="BC004390">
    <property type="protein sequence ID" value="AAH04390.1"/>
    <property type="molecule type" value="mRNA"/>
</dbReference>
<dbReference type="CCDS" id="CCDS6271.1">
    <molecule id="P48651-1"/>
</dbReference>
<dbReference type="RefSeq" id="NP_001277154.1">
    <molecule id="P48651-2"/>
    <property type="nucleotide sequence ID" value="NM_001290225.2"/>
</dbReference>
<dbReference type="RefSeq" id="NP_055569.1">
    <molecule id="P48651-1"/>
    <property type="nucleotide sequence ID" value="NM_014754.3"/>
</dbReference>
<dbReference type="PDB" id="9B4E">
    <property type="method" value="EM"/>
    <property type="resolution" value="2.70 A"/>
    <property type="chains" value="A/B=1-409"/>
</dbReference>
<dbReference type="PDB" id="9B4F">
    <property type="method" value="EM"/>
    <property type="resolution" value="3.27 A"/>
    <property type="chains" value="A/B=1-473"/>
</dbReference>
<dbReference type="PDB" id="9B4G">
    <property type="method" value="EM"/>
    <property type="resolution" value="2.87 A"/>
    <property type="chains" value="A/B=1-409"/>
</dbReference>
<dbReference type="PDBsum" id="9B4E"/>
<dbReference type="PDBsum" id="9B4F"/>
<dbReference type="PDBsum" id="9B4G"/>
<dbReference type="EMDB" id="EMD-44178"/>
<dbReference type="EMDB" id="EMD-44179"/>
<dbReference type="EMDB" id="EMD-44180"/>
<dbReference type="SMR" id="P48651"/>
<dbReference type="BioGRID" id="115135">
    <property type="interactions" value="230"/>
</dbReference>
<dbReference type="FunCoup" id="P48651">
    <property type="interactions" value="1247"/>
</dbReference>
<dbReference type="IntAct" id="P48651">
    <property type="interactions" value="147"/>
</dbReference>
<dbReference type="MINT" id="P48651"/>
<dbReference type="STRING" id="9606.ENSP00000430548"/>
<dbReference type="ChEMBL" id="CHEMBL5465290"/>
<dbReference type="DrugBank" id="DB00144">
    <property type="generic name" value="Phosphatidyl serine"/>
</dbReference>
<dbReference type="SwissLipids" id="SLP:000001060"/>
<dbReference type="GlyGen" id="P48651">
    <property type="glycosylation" value="1 site, 1 O-linked glycan (1 site)"/>
</dbReference>
<dbReference type="iPTMnet" id="P48651"/>
<dbReference type="MetOSite" id="P48651"/>
<dbReference type="PhosphoSitePlus" id="P48651"/>
<dbReference type="SwissPalm" id="P48651"/>
<dbReference type="BioMuta" id="PTDSS1"/>
<dbReference type="DMDM" id="1346881"/>
<dbReference type="jPOST" id="P48651"/>
<dbReference type="MassIVE" id="P48651"/>
<dbReference type="PaxDb" id="9606-ENSP00000430548"/>
<dbReference type="PeptideAtlas" id="P48651"/>
<dbReference type="ProteomicsDB" id="3928"/>
<dbReference type="ProteomicsDB" id="55920">
    <molecule id="P48651-1"/>
</dbReference>
<dbReference type="ProteomicsDB" id="79120"/>
<dbReference type="Pumba" id="P48651"/>
<dbReference type="Antibodypedia" id="12969">
    <property type="antibodies" value="144 antibodies from 23 providers"/>
</dbReference>
<dbReference type="DNASU" id="9791"/>
<dbReference type="Ensembl" id="ENST00000517309.6">
    <molecule id="P48651-1"/>
    <property type="protein sequence ID" value="ENSP00000430548.1"/>
    <property type="gene ID" value="ENSG00000156471.13"/>
</dbReference>
<dbReference type="Ensembl" id="ENST00000522072.1">
    <molecule id="P48651-3"/>
    <property type="protein sequence ID" value="ENSP00000430928.1"/>
    <property type="gene ID" value="ENSG00000156471.13"/>
</dbReference>
<dbReference type="GeneID" id="9791"/>
<dbReference type="KEGG" id="hsa:9791"/>
<dbReference type="MANE-Select" id="ENST00000517309.6">
    <property type="protein sequence ID" value="ENSP00000430548.1"/>
    <property type="RefSeq nucleotide sequence ID" value="NM_014754.3"/>
    <property type="RefSeq protein sequence ID" value="NP_055569.1"/>
</dbReference>
<dbReference type="UCSC" id="uc003yht.2">
    <molecule id="P48651-1"/>
    <property type="organism name" value="human"/>
</dbReference>
<dbReference type="UCSC" id="uc064ouh.1">
    <property type="organism name" value="human"/>
</dbReference>
<dbReference type="AGR" id="HGNC:9587"/>
<dbReference type="CTD" id="9791"/>
<dbReference type="DisGeNET" id="9791"/>
<dbReference type="GeneCards" id="PTDSS1"/>
<dbReference type="HGNC" id="HGNC:9587">
    <property type="gene designation" value="PTDSS1"/>
</dbReference>
<dbReference type="HPA" id="ENSG00000156471">
    <property type="expression patterns" value="Low tissue specificity"/>
</dbReference>
<dbReference type="MalaCards" id="PTDSS1"/>
<dbReference type="MIM" id="151050">
    <property type="type" value="phenotype"/>
</dbReference>
<dbReference type="MIM" id="612792">
    <property type="type" value="gene"/>
</dbReference>
<dbReference type="neXtProt" id="NX_P48651"/>
<dbReference type="OpenTargets" id="ENSG00000156471"/>
<dbReference type="Orphanet" id="2658">
    <property type="disease" value="Lenz-Majewski hyperostotic dwarfism"/>
</dbReference>
<dbReference type="PharmGKB" id="PA33939"/>
<dbReference type="VEuPathDB" id="HostDB:ENSG00000156471"/>
<dbReference type="eggNOG" id="KOG2735">
    <property type="taxonomic scope" value="Eukaryota"/>
</dbReference>
<dbReference type="GeneTree" id="ENSGT00530000063576"/>
<dbReference type="HOGENOM" id="CLU_037661_3_0_1"/>
<dbReference type="InParanoid" id="P48651"/>
<dbReference type="OMA" id="LPNFWEC"/>
<dbReference type="OrthoDB" id="10265393at2759"/>
<dbReference type="PAN-GO" id="P48651">
    <property type="GO annotations" value="0 GO annotations based on evolutionary models"/>
</dbReference>
<dbReference type="PhylomeDB" id="P48651"/>
<dbReference type="TreeFam" id="TF300012"/>
<dbReference type="BioCyc" id="MetaCyc:HS08129-MONOMER"/>
<dbReference type="BRENDA" id="2.7.8.29">
    <property type="organism ID" value="2681"/>
</dbReference>
<dbReference type="PathwayCommons" id="P48651"/>
<dbReference type="Reactome" id="R-HSA-1483101">
    <property type="pathway name" value="Synthesis of PS"/>
</dbReference>
<dbReference type="SignaLink" id="P48651"/>
<dbReference type="UniPathway" id="UPA00948"/>
<dbReference type="BioGRID-ORCS" id="9791">
    <property type="hits" value="161 hits in 1159 CRISPR screens"/>
</dbReference>
<dbReference type="ChiTaRS" id="PTDSS1">
    <property type="organism name" value="human"/>
</dbReference>
<dbReference type="GenomeRNAi" id="9791"/>
<dbReference type="Pharos" id="P48651">
    <property type="development level" value="Tbio"/>
</dbReference>
<dbReference type="PRO" id="PR:P48651"/>
<dbReference type="Proteomes" id="UP000005640">
    <property type="component" value="Chromosome 8"/>
</dbReference>
<dbReference type="RNAct" id="P48651">
    <property type="molecule type" value="protein"/>
</dbReference>
<dbReference type="Bgee" id="ENSG00000156471">
    <property type="expression patterns" value="Expressed in cortical plate and 207 other cell types or tissues"/>
</dbReference>
<dbReference type="ExpressionAtlas" id="P48651">
    <property type="expression patterns" value="baseline and differential"/>
</dbReference>
<dbReference type="GO" id="GO:0005789">
    <property type="term" value="C:endoplasmic reticulum membrane"/>
    <property type="evidence" value="ECO:0000250"/>
    <property type="project" value="UniProtKB"/>
</dbReference>
<dbReference type="GO" id="GO:0016020">
    <property type="term" value="C:membrane"/>
    <property type="evidence" value="ECO:0007005"/>
    <property type="project" value="UniProtKB"/>
</dbReference>
<dbReference type="GO" id="GO:0106258">
    <property type="term" value="F:L-serine-phosphatidylcholine phosphatidyltransferase activity"/>
    <property type="evidence" value="ECO:0000314"/>
    <property type="project" value="FlyBase"/>
</dbReference>
<dbReference type="GO" id="GO:0106245">
    <property type="term" value="F:L-serine-phosphatidylethanolamine phosphatidyltransferase activity"/>
    <property type="evidence" value="ECO:0000314"/>
    <property type="project" value="FlyBase"/>
</dbReference>
<dbReference type="GO" id="GO:0016740">
    <property type="term" value="F:transferase activity"/>
    <property type="evidence" value="ECO:0000304"/>
    <property type="project" value="Reactome"/>
</dbReference>
<dbReference type="GO" id="GO:0006659">
    <property type="term" value="P:phosphatidylserine biosynthetic process"/>
    <property type="evidence" value="ECO:0000314"/>
    <property type="project" value="FlyBase"/>
</dbReference>
<dbReference type="InterPro" id="IPR004277">
    <property type="entry name" value="PSS"/>
</dbReference>
<dbReference type="PANTHER" id="PTHR15362">
    <property type="entry name" value="PHOSPHATIDYLINOSITOL SYNTHASE"/>
    <property type="match status" value="1"/>
</dbReference>
<dbReference type="PANTHER" id="PTHR15362:SF15">
    <property type="entry name" value="PHOSPHATIDYLSERINE SYNTHASE 1"/>
    <property type="match status" value="1"/>
</dbReference>
<dbReference type="Pfam" id="PF03034">
    <property type="entry name" value="PSS"/>
    <property type="match status" value="1"/>
</dbReference>
<proteinExistence type="evidence at protein level"/>